<sequence>MNMSSSSRKLSRLFNIVTQNQKSPVLLSSDQEAARRITACLVEKSTIGKLQSNPSLLFNLNSNVTRLVLSEPTLPTQSCIDFFKLLREFESNLKPDLTAVVTLSHRLYSNRRFNEMRSLLNSVVNDGFYKRPVEELGSAMVDCDISEEKFEFFEKFFDLVFRVYVDNGMFEEGLRVFDYMVKKGLSIDERSCIVFLVAAKKRRRIDLCLEIFRRMVDSGVKITVYSLTIVVEGLCRRGEVEKSKKLIKEFSVKGIKPEAYTYNTIINAYVKQRDFSGVEGVLKVMKKDGVVYNKVTYTLLMELSVKNGKMSDAEKLFDEMRERGIESDVHVYTSLISWNCRKGNMKRAFLLFDELTEKGLSPSSYTYGALIDGVCKVGEMGAAEILMNEMQSKGVNITQVVFNTLIDGYCRKGMVDEASMIYDVMEQKGFQADVFTCNTIASCFNRLKRYDEAKQWLFRMMEGGVKLSTVSYTNLIDVYCKEGNVEEAKRLFVEMSSKGVQPNAITYNVMIYAYCKQGKIKEARKLRANMEANGMDPDSYTYTSLIHGECIADNVDEAMRLFSEMGLKGLDQNSVTYTVMISGLSKAGKSDEAFGLYDEMKRKGYTIDNKVYTALIGSMHSPET</sequence>
<protein>
    <recommendedName>
        <fullName>Pentatricopeptide repeat-containing protein At2g32630</fullName>
    </recommendedName>
</protein>
<proteinExistence type="inferred from homology"/>
<comment type="similarity">
    <text evidence="1">Belongs to the PPR family. P subfamily.</text>
</comment>
<comment type="online information" name="Pentatricopeptide repeat proteins">
    <link uri="https://ppr.plantenergy.uwa.edu.au"/>
</comment>
<keyword id="KW-1185">Reference proteome</keyword>
<keyword id="KW-0677">Repeat</keyword>
<name>PP180_ARATH</name>
<dbReference type="EMBL" id="AC004681">
    <property type="protein sequence ID" value="AAM14987.1"/>
    <property type="molecule type" value="Genomic_DNA"/>
</dbReference>
<dbReference type="EMBL" id="CP002685">
    <property type="protein sequence ID" value="AEC08707.1"/>
    <property type="molecule type" value="Genomic_DNA"/>
</dbReference>
<dbReference type="PIR" id="T02562">
    <property type="entry name" value="T02562"/>
</dbReference>
<dbReference type="RefSeq" id="NP_180822.1">
    <property type="nucleotide sequence ID" value="NM_128822.2"/>
</dbReference>
<dbReference type="SMR" id="Q8S8P6"/>
<dbReference type="FunCoup" id="Q8S8P6">
    <property type="interactions" value="109"/>
</dbReference>
<dbReference type="PaxDb" id="3702-AT2G32630.1"/>
<dbReference type="ProteomicsDB" id="249149"/>
<dbReference type="EnsemblPlants" id="AT2G32630.1">
    <property type="protein sequence ID" value="AT2G32630.1"/>
    <property type="gene ID" value="AT2G32630"/>
</dbReference>
<dbReference type="GeneID" id="817823"/>
<dbReference type="Gramene" id="AT2G32630.1">
    <property type="protein sequence ID" value="AT2G32630.1"/>
    <property type="gene ID" value="AT2G32630"/>
</dbReference>
<dbReference type="KEGG" id="ath:AT2G32630"/>
<dbReference type="Araport" id="AT2G32630"/>
<dbReference type="TAIR" id="AT2G32630"/>
<dbReference type="eggNOG" id="KOG4197">
    <property type="taxonomic scope" value="Eukaryota"/>
</dbReference>
<dbReference type="HOGENOM" id="CLU_002706_49_12_1"/>
<dbReference type="InParanoid" id="Q8S8P6"/>
<dbReference type="OMA" id="MIYDVME"/>
<dbReference type="PhylomeDB" id="Q8S8P6"/>
<dbReference type="PRO" id="PR:Q8S8P6"/>
<dbReference type="Proteomes" id="UP000006548">
    <property type="component" value="Chromosome 2"/>
</dbReference>
<dbReference type="ExpressionAtlas" id="Q8S8P6">
    <property type="expression patterns" value="baseline and differential"/>
</dbReference>
<dbReference type="Gene3D" id="1.25.40.10">
    <property type="entry name" value="Tetratricopeptide repeat domain"/>
    <property type="match status" value="6"/>
</dbReference>
<dbReference type="InterPro" id="IPR002885">
    <property type="entry name" value="Pentatricopeptide_rpt"/>
</dbReference>
<dbReference type="InterPro" id="IPR033443">
    <property type="entry name" value="PROP1-like_PPR_dom"/>
</dbReference>
<dbReference type="InterPro" id="IPR011990">
    <property type="entry name" value="TPR-like_helical_dom_sf"/>
</dbReference>
<dbReference type="NCBIfam" id="TIGR00756">
    <property type="entry name" value="PPR"/>
    <property type="match status" value="12"/>
</dbReference>
<dbReference type="PANTHER" id="PTHR47447">
    <property type="entry name" value="OS03G0856100 PROTEIN"/>
    <property type="match status" value="1"/>
</dbReference>
<dbReference type="PANTHER" id="PTHR47447:SF23">
    <property type="entry name" value="PENTACOTRIPEPTIDE-REPEAT REGION OF PRORP DOMAIN-CONTAINING PROTEIN"/>
    <property type="match status" value="1"/>
</dbReference>
<dbReference type="Pfam" id="PF12854">
    <property type="entry name" value="PPR_1"/>
    <property type="match status" value="1"/>
</dbReference>
<dbReference type="Pfam" id="PF13041">
    <property type="entry name" value="PPR_2"/>
    <property type="match status" value="4"/>
</dbReference>
<dbReference type="Pfam" id="PF17177">
    <property type="entry name" value="PPR_long"/>
    <property type="match status" value="1"/>
</dbReference>
<dbReference type="SUPFAM" id="SSF81901">
    <property type="entry name" value="HCP-like"/>
    <property type="match status" value="1"/>
</dbReference>
<dbReference type="PROSITE" id="PS51375">
    <property type="entry name" value="PPR"/>
    <property type="match status" value="14"/>
</dbReference>
<accession>Q8S8P6</accession>
<reference key="1">
    <citation type="journal article" date="1999" name="Nature">
        <title>Sequence and analysis of chromosome 2 of the plant Arabidopsis thaliana.</title>
        <authorList>
            <person name="Lin X."/>
            <person name="Kaul S."/>
            <person name="Rounsley S.D."/>
            <person name="Shea T.P."/>
            <person name="Benito M.-I."/>
            <person name="Town C.D."/>
            <person name="Fujii C.Y."/>
            <person name="Mason T.M."/>
            <person name="Bowman C.L."/>
            <person name="Barnstead M.E."/>
            <person name="Feldblyum T.V."/>
            <person name="Buell C.R."/>
            <person name="Ketchum K.A."/>
            <person name="Lee J.J."/>
            <person name="Ronning C.M."/>
            <person name="Koo H.L."/>
            <person name="Moffat K.S."/>
            <person name="Cronin L.A."/>
            <person name="Shen M."/>
            <person name="Pai G."/>
            <person name="Van Aken S."/>
            <person name="Umayam L."/>
            <person name="Tallon L.J."/>
            <person name="Gill J.E."/>
            <person name="Adams M.D."/>
            <person name="Carrera A.J."/>
            <person name="Creasy T.H."/>
            <person name="Goodman H.M."/>
            <person name="Somerville C.R."/>
            <person name="Copenhaver G.P."/>
            <person name="Preuss D."/>
            <person name="Nierman W.C."/>
            <person name="White O."/>
            <person name="Eisen J.A."/>
            <person name="Salzberg S.L."/>
            <person name="Fraser C.M."/>
            <person name="Venter J.C."/>
        </authorList>
    </citation>
    <scope>NUCLEOTIDE SEQUENCE [LARGE SCALE GENOMIC DNA]</scope>
    <source>
        <strain>cv. Columbia</strain>
    </source>
</reference>
<reference key="2">
    <citation type="journal article" date="2017" name="Plant J.">
        <title>Araport11: a complete reannotation of the Arabidopsis thaliana reference genome.</title>
        <authorList>
            <person name="Cheng C.Y."/>
            <person name="Krishnakumar V."/>
            <person name="Chan A.P."/>
            <person name="Thibaud-Nissen F."/>
            <person name="Schobel S."/>
            <person name="Town C.D."/>
        </authorList>
    </citation>
    <scope>GENOME REANNOTATION</scope>
    <source>
        <strain>cv. Columbia</strain>
    </source>
</reference>
<reference key="3">
    <citation type="journal article" date="2004" name="Plant Cell">
        <title>Genome-wide analysis of Arabidopsis pentatricopeptide repeat proteins reveals their essential role in organelle biogenesis.</title>
        <authorList>
            <person name="Lurin C."/>
            <person name="Andres C."/>
            <person name="Aubourg S."/>
            <person name="Bellaoui M."/>
            <person name="Bitton F."/>
            <person name="Bruyere C."/>
            <person name="Caboche M."/>
            <person name="Debast C."/>
            <person name="Gualberto J."/>
            <person name="Hoffmann B."/>
            <person name="Lecharny A."/>
            <person name="Le Ret M."/>
            <person name="Martin-Magniette M.-L."/>
            <person name="Mireau H."/>
            <person name="Peeters N."/>
            <person name="Renou J.-P."/>
            <person name="Szurek B."/>
            <person name="Taconnat L."/>
            <person name="Small I."/>
        </authorList>
    </citation>
    <scope>GENE FAMILY</scope>
</reference>
<organism>
    <name type="scientific">Arabidopsis thaliana</name>
    <name type="common">Mouse-ear cress</name>
    <dbReference type="NCBI Taxonomy" id="3702"/>
    <lineage>
        <taxon>Eukaryota</taxon>
        <taxon>Viridiplantae</taxon>
        <taxon>Streptophyta</taxon>
        <taxon>Embryophyta</taxon>
        <taxon>Tracheophyta</taxon>
        <taxon>Spermatophyta</taxon>
        <taxon>Magnoliopsida</taxon>
        <taxon>eudicotyledons</taxon>
        <taxon>Gunneridae</taxon>
        <taxon>Pentapetalae</taxon>
        <taxon>rosids</taxon>
        <taxon>malvids</taxon>
        <taxon>Brassicales</taxon>
        <taxon>Brassicaceae</taxon>
        <taxon>Camelineae</taxon>
        <taxon>Arabidopsis</taxon>
    </lineage>
</organism>
<gene>
    <name type="ordered locus">At2g32630</name>
    <name type="ORF">T26B15.19</name>
</gene>
<evidence type="ECO:0000305" key="1"/>
<feature type="chain" id="PRO_0000356039" description="Pentatricopeptide repeat-containing protein At2g32630">
    <location>
        <begin position="1"/>
        <end position="624"/>
    </location>
</feature>
<feature type="repeat" description="PPR 1">
    <location>
        <begin position="153"/>
        <end position="187"/>
    </location>
</feature>
<feature type="repeat" description="PPR 2">
    <location>
        <begin position="188"/>
        <end position="222"/>
    </location>
</feature>
<feature type="repeat" description="PPR 3">
    <location>
        <begin position="223"/>
        <end position="257"/>
    </location>
</feature>
<feature type="repeat" description="PPR 4">
    <location>
        <begin position="258"/>
        <end position="292"/>
    </location>
</feature>
<feature type="repeat" description="PPR 5">
    <location>
        <begin position="293"/>
        <end position="327"/>
    </location>
</feature>
<feature type="repeat" description="PPR 6">
    <location>
        <begin position="328"/>
        <end position="362"/>
    </location>
</feature>
<feature type="repeat" description="PPR 7">
    <location>
        <begin position="363"/>
        <end position="397"/>
    </location>
</feature>
<feature type="repeat" description="PPR 8">
    <location>
        <begin position="398"/>
        <end position="432"/>
    </location>
</feature>
<feature type="repeat" description="PPR 9">
    <location>
        <begin position="433"/>
        <end position="467"/>
    </location>
</feature>
<feature type="repeat" description="PPR 10">
    <location>
        <begin position="468"/>
        <end position="502"/>
    </location>
</feature>
<feature type="repeat" description="PPR 11">
    <location>
        <begin position="503"/>
        <end position="537"/>
    </location>
</feature>
<feature type="repeat" description="PPR 12">
    <location>
        <begin position="538"/>
        <end position="572"/>
    </location>
</feature>
<feature type="repeat" description="PPR 13">
    <location>
        <begin position="573"/>
        <end position="607"/>
    </location>
</feature>